<organism>
    <name type="scientific">Bacillus velezensis (strain DSM 23117 / BGSC 10A6 / LMG 26770 / FZB42)</name>
    <name type="common">Bacillus amyloliquefaciens subsp. plantarum</name>
    <dbReference type="NCBI Taxonomy" id="326423"/>
    <lineage>
        <taxon>Bacteria</taxon>
        <taxon>Bacillati</taxon>
        <taxon>Bacillota</taxon>
        <taxon>Bacilli</taxon>
        <taxon>Bacillales</taxon>
        <taxon>Bacillaceae</taxon>
        <taxon>Bacillus</taxon>
        <taxon>Bacillus amyloliquefaciens group</taxon>
    </lineage>
</organism>
<name>HUTH_BACVZ</name>
<keyword id="KW-0963">Cytoplasm</keyword>
<keyword id="KW-0369">Histidine metabolism</keyword>
<keyword id="KW-0456">Lyase</keyword>
<feature type="chain" id="PRO_0000336583" description="Histidine ammonia-lyase">
    <location>
        <begin position="1"/>
        <end position="512"/>
    </location>
</feature>
<feature type="modified residue" description="2,3-didehydroalanine (Ser)" evidence="1">
    <location>
        <position position="142"/>
    </location>
</feature>
<feature type="cross-link" description="5-imidazolinone (Ala-Gly)" evidence="1">
    <location>
        <begin position="141"/>
        <end position="143"/>
    </location>
</feature>
<reference key="1">
    <citation type="journal article" date="2007" name="Nat. Biotechnol.">
        <title>Comparative analysis of the complete genome sequence of the plant growth-promoting bacterium Bacillus amyloliquefaciens FZB42.</title>
        <authorList>
            <person name="Chen X.H."/>
            <person name="Koumoutsi A."/>
            <person name="Scholz R."/>
            <person name="Eisenreich A."/>
            <person name="Schneider K."/>
            <person name="Heinemeyer I."/>
            <person name="Morgenstern B."/>
            <person name="Voss B."/>
            <person name="Hess W.R."/>
            <person name="Reva O."/>
            <person name="Junge H."/>
            <person name="Voigt B."/>
            <person name="Jungblut P.R."/>
            <person name="Vater J."/>
            <person name="Suessmuth R."/>
            <person name="Liesegang H."/>
            <person name="Strittmatter A."/>
            <person name="Gottschalk G."/>
            <person name="Borriss R."/>
        </authorList>
    </citation>
    <scope>NUCLEOTIDE SEQUENCE [LARGE SCALE GENOMIC DNA]</scope>
    <source>
        <strain>DSM 23117 / BGSC 10A6 / LMG 26770 / FZB42</strain>
    </source>
</reference>
<proteinExistence type="inferred from homology"/>
<accession>A7ZAE4</accession>
<evidence type="ECO:0000255" key="1">
    <source>
        <dbReference type="HAMAP-Rule" id="MF_00229"/>
    </source>
</evidence>
<evidence type="ECO:0000305" key="2"/>
<dbReference type="EC" id="4.3.1.3" evidence="1"/>
<dbReference type="EMBL" id="CP000560">
    <property type="protein sequence ID" value="ABS75970.1"/>
    <property type="status" value="ALT_INIT"/>
    <property type="molecule type" value="Genomic_DNA"/>
</dbReference>
<dbReference type="RefSeq" id="WP_041482230.1">
    <property type="nucleotide sequence ID" value="NC_009725.2"/>
</dbReference>
<dbReference type="SMR" id="A7ZAE4"/>
<dbReference type="GeneID" id="93082781"/>
<dbReference type="KEGG" id="bay:RBAM_036410"/>
<dbReference type="HOGENOM" id="CLU_014801_4_0_9"/>
<dbReference type="UniPathway" id="UPA00379">
    <property type="reaction ID" value="UER00549"/>
</dbReference>
<dbReference type="Proteomes" id="UP000001120">
    <property type="component" value="Chromosome"/>
</dbReference>
<dbReference type="GO" id="GO:0005737">
    <property type="term" value="C:cytoplasm"/>
    <property type="evidence" value="ECO:0007669"/>
    <property type="project" value="UniProtKB-SubCell"/>
</dbReference>
<dbReference type="GO" id="GO:0004397">
    <property type="term" value="F:histidine ammonia-lyase activity"/>
    <property type="evidence" value="ECO:0007669"/>
    <property type="project" value="UniProtKB-UniRule"/>
</dbReference>
<dbReference type="GO" id="GO:0019556">
    <property type="term" value="P:L-histidine catabolic process to glutamate and formamide"/>
    <property type="evidence" value="ECO:0007669"/>
    <property type="project" value="UniProtKB-UniPathway"/>
</dbReference>
<dbReference type="GO" id="GO:0019557">
    <property type="term" value="P:L-histidine catabolic process to glutamate and formate"/>
    <property type="evidence" value="ECO:0007669"/>
    <property type="project" value="UniProtKB-UniPathway"/>
</dbReference>
<dbReference type="CDD" id="cd00332">
    <property type="entry name" value="PAL-HAL"/>
    <property type="match status" value="1"/>
</dbReference>
<dbReference type="FunFam" id="1.10.275.10:FF:000008">
    <property type="entry name" value="Histidine ammonia-lyase"/>
    <property type="match status" value="1"/>
</dbReference>
<dbReference type="FunFam" id="1.20.200.10:FF:000003">
    <property type="entry name" value="Histidine ammonia-lyase"/>
    <property type="match status" value="1"/>
</dbReference>
<dbReference type="Gene3D" id="1.20.200.10">
    <property type="entry name" value="Fumarase/aspartase (Central domain)"/>
    <property type="match status" value="1"/>
</dbReference>
<dbReference type="Gene3D" id="1.10.275.10">
    <property type="entry name" value="Fumarase/aspartase (N-terminal domain)"/>
    <property type="match status" value="1"/>
</dbReference>
<dbReference type="HAMAP" id="MF_00229">
    <property type="entry name" value="His_ammonia_lyase"/>
    <property type="match status" value="1"/>
</dbReference>
<dbReference type="InterPro" id="IPR001106">
    <property type="entry name" value="Aromatic_Lyase"/>
</dbReference>
<dbReference type="InterPro" id="IPR024083">
    <property type="entry name" value="Fumarase/histidase_N"/>
</dbReference>
<dbReference type="InterPro" id="IPR005921">
    <property type="entry name" value="HutH"/>
</dbReference>
<dbReference type="InterPro" id="IPR008948">
    <property type="entry name" value="L-Aspartase-like"/>
</dbReference>
<dbReference type="InterPro" id="IPR022313">
    <property type="entry name" value="Phe/His_NH3-lyase_AS"/>
</dbReference>
<dbReference type="NCBIfam" id="TIGR01225">
    <property type="entry name" value="hutH"/>
    <property type="match status" value="1"/>
</dbReference>
<dbReference type="NCBIfam" id="NF006871">
    <property type="entry name" value="PRK09367.1"/>
    <property type="match status" value="1"/>
</dbReference>
<dbReference type="PANTHER" id="PTHR10362">
    <property type="entry name" value="HISTIDINE AMMONIA-LYASE"/>
    <property type="match status" value="1"/>
</dbReference>
<dbReference type="Pfam" id="PF00221">
    <property type="entry name" value="Lyase_aromatic"/>
    <property type="match status" value="1"/>
</dbReference>
<dbReference type="SUPFAM" id="SSF48557">
    <property type="entry name" value="L-aspartase-like"/>
    <property type="match status" value="1"/>
</dbReference>
<dbReference type="PROSITE" id="PS00488">
    <property type="entry name" value="PAL_HISTIDASE"/>
    <property type="match status" value="1"/>
</dbReference>
<protein>
    <recommendedName>
        <fullName evidence="1">Histidine ammonia-lyase</fullName>
        <shortName evidence="1">Histidase</shortName>
        <ecNumber evidence="1">4.3.1.3</ecNumber>
    </recommendedName>
</protein>
<sequence length="512" mass="56317">MVTLDGSSLTTADAQRVLFDFEEVQASAESMERVKKSRAAVERIVQEEKTIYGITTGFGKFSDVLIQKEDAADLQLNLILSHACGVGDPFPESVSRAMLLLRANALLKGFSGVRTELIDQLLAYLNHRIHPVIPQQGSLGASGDLAPLSHLALALIGQGEVFYEGARMPTAHALEQTNLQPAVLTSKEGLALINGTQAMTAMGLIAYLEAEKLAYQSERIASLTIEGLQGIIDAFDEDIHAARGYQEQMDVAERIRYYLSDSKLTTVQGELRVQDAYSIRCIPQVHGASWQTLAYVKEKLEIEMNAATDNPLIFEDGAKIISGGNFHGQPIAFAMDFLKVAAAELANISERRIERLVNPQLNDLPPFLSPQPGLQSGAMIMQYAAASLVSENKTLAHPASVDSIPSSANQEDHVSMGTIASRHAYQIIANTRRVLAVEAICALQAVEYRGEEHCASYTKQLYHEMRNIVPSIQEDRVFSYDIEHLSDWLKKESFLPNEHHQKLMTNEGGLTR</sequence>
<comment type="catalytic activity">
    <reaction evidence="1">
        <text>L-histidine = trans-urocanate + NH4(+)</text>
        <dbReference type="Rhea" id="RHEA:21232"/>
        <dbReference type="ChEBI" id="CHEBI:17771"/>
        <dbReference type="ChEBI" id="CHEBI:28938"/>
        <dbReference type="ChEBI" id="CHEBI:57595"/>
        <dbReference type="EC" id="4.3.1.3"/>
    </reaction>
</comment>
<comment type="pathway">
    <text evidence="1">Amino-acid degradation; L-histidine degradation into L-glutamate; N-formimidoyl-L-glutamate from L-histidine: step 1/3.</text>
</comment>
<comment type="subcellular location">
    <subcellularLocation>
        <location evidence="1">Cytoplasm</location>
    </subcellularLocation>
</comment>
<comment type="PTM">
    <text evidence="1">Contains an active site 4-methylidene-imidazol-5-one (MIO), which is formed autocatalytically by cyclization and dehydration of residues Ala-Ser-Gly.</text>
</comment>
<comment type="similarity">
    <text evidence="1">Belongs to the PAL/histidase family.</text>
</comment>
<comment type="sequence caution" evidence="2">
    <conflict type="erroneous initiation">
        <sequence resource="EMBL-CDS" id="ABS75970"/>
    </conflict>
</comment>
<gene>
    <name evidence="1" type="primary">hutH</name>
    <name type="ordered locus">RBAM_036410</name>
</gene>